<proteinExistence type="inferred from homology"/>
<name>MURC_LEUMM</name>
<gene>
    <name evidence="1" type="primary">murC</name>
    <name type="ordered locus">LEUM_0709</name>
</gene>
<accession>Q03YA3</accession>
<sequence>MSKKYYFIGIKGTGMGPLAQILHDQGNEVLGSDIDTYTYTQAPLEAAGIKILTFDARNIDANQDAIFVRGNAFNNDQIEVARALEIGVTMVSYPEAVQEQISQTTSIAVAGAHGKTSTTGLLAHVLKNIAPTSYLIGDGTGRGVPNSQFFVVEADEYRRHFKDYAPDYAILTNIDFDHPDYYTGIEDVTSAFADFANNVKKAIFAWGDDEHLRSLKPSADVYYYGVNPERDDFVATNIHKSTQGSHFDVVFRGKDLGEFAVPLFGQHGILNALAVIAVSYMEEVDLDLIRQYLLTYQGVKRRFSEKQIADITVIDDYAHHPTEITATLDAARQKYPNKKIIAIFQPHTFSRVIAYKDEFASSLEAADQVYLANIFGSAREQAGTITSKDLGSEISKFGGIIEENDMSLLMPYENAVMVFMGAGDIEKYEFAYEKLLGQLRTDLT</sequence>
<comment type="function">
    <text evidence="1">Cell wall formation.</text>
</comment>
<comment type="catalytic activity">
    <reaction evidence="1">
        <text>UDP-N-acetyl-alpha-D-muramate + L-alanine + ATP = UDP-N-acetyl-alpha-D-muramoyl-L-alanine + ADP + phosphate + H(+)</text>
        <dbReference type="Rhea" id="RHEA:23372"/>
        <dbReference type="ChEBI" id="CHEBI:15378"/>
        <dbReference type="ChEBI" id="CHEBI:30616"/>
        <dbReference type="ChEBI" id="CHEBI:43474"/>
        <dbReference type="ChEBI" id="CHEBI:57972"/>
        <dbReference type="ChEBI" id="CHEBI:70757"/>
        <dbReference type="ChEBI" id="CHEBI:83898"/>
        <dbReference type="ChEBI" id="CHEBI:456216"/>
        <dbReference type="EC" id="6.3.2.8"/>
    </reaction>
</comment>
<comment type="pathway">
    <text evidence="1">Cell wall biogenesis; peptidoglycan biosynthesis.</text>
</comment>
<comment type="subcellular location">
    <subcellularLocation>
        <location evidence="1">Cytoplasm</location>
    </subcellularLocation>
</comment>
<comment type="similarity">
    <text evidence="1">Belongs to the MurCDEF family.</text>
</comment>
<organism>
    <name type="scientific">Leuconostoc mesenteroides subsp. mesenteroides (strain ATCC 8293 / DSM 20343 / BCRC 11652 / CCM 1803 / JCM 6124 / NCDO 523 / NBRC 100496 / NCIMB 8023 / NCTC 12954 / NRRL B-1118 / 37Y)</name>
    <dbReference type="NCBI Taxonomy" id="203120"/>
    <lineage>
        <taxon>Bacteria</taxon>
        <taxon>Bacillati</taxon>
        <taxon>Bacillota</taxon>
        <taxon>Bacilli</taxon>
        <taxon>Lactobacillales</taxon>
        <taxon>Lactobacillaceae</taxon>
        <taxon>Leuconostoc</taxon>
    </lineage>
</organism>
<reference key="1">
    <citation type="journal article" date="2006" name="Proc. Natl. Acad. Sci. U.S.A.">
        <title>Comparative genomics of the lactic acid bacteria.</title>
        <authorList>
            <person name="Makarova K.S."/>
            <person name="Slesarev A."/>
            <person name="Wolf Y.I."/>
            <person name="Sorokin A."/>
            <person name="Mirkin B."/>
            <person name="Koonin E.V."/>
            <person name="Pavlov A."/>
            <person name="Pavlova N."/>
            <person name="Karamychev V."/>
            <person name="Polouchine N."/>
            <person name="Shakhova V."/>
            <person name="Grigoriev I."/>
            <person name="Lou Y."/>
            <person name="Rohksar D."/>
            <person name="Lucas S."/>
            <person name="Huang K."/>
            <person name="Goodstein D.M."/>
            <person name="Hawkins T."/>
            <person name="Plengvidhya V."/>
            <person name="Welker D."/>
            <person name="Hughes J."/>
            <person name="Goh Y."/>
            <person name="Benson A."/>
            <person name="Baldwin K."/>
            <person name="Lee J.-H."/>
            <person name="Diaz-Muniz I."/>
            <person name="Dosti B."/>
            <person name="Smeianov V."/>
            <person name="Wechter W."/>
            <person name="Barabote R."/>
            <person name="Lorca G."/>
            <person name="Altermann E."/>
            <person name="Barrangou R."/>
            <person name="Ganesan B."/>
            <person name="Xie Y."/>
            <person name="Rawsthorne H."/>
            <person name="Tamir D."/>
            <person name="Parker C."/>
            <person name="Breidt F."/>
            <person name="Broadbent J.R."/>
            <person name="Hutkins R."/>
            <person name="O'Sullivan D."/>
            <person name="Steele J."/>
            <person name="Unlu G."/>
            <person name="Saier M.H. Jr."/>
            <person name="Klaenhammer T."/>
            <person name="Richardson P."/>
            <person name="Kozyavkin S."/>
            <person name="Weimer B.C."/>
            <person name="Mills D.A."/>
        </authorList>
    </citation>
    <scope>NUCLEOTIDE SEQUENCE [LARGE SCALE GENOMIC DNA]</scope>
    <source>
        <strain>ATCC 8293 / DSM 20343 / BCRC 11652 / CCM 1803 / JCM 6124 / NCDO 523 / NBRC 100496 / NCIMB 8023 / NCTC 12954 / NRRL B-1118 / 37Y</strain>
    </source>
</reference>
<protein>
    <recommendedName>
        <fullName evidence="1">UDP-N-acetylmuramate--L-alanine ligase</fullName>
        <ecNumber evidence="1">6.3.2.8</ecNumber>
    </recommendedName>
    <alternativeName>
        <fullName evidence="1">UDP-N-acetylmuramoyl-L-alanine synthetase</fullName>
    </alternativeName>
</protein>
<feature type="chain" id="PRO_1000004364" description="UDP-N-acetylmuramate--L-alanine ligase">
    <location>
        <begin position="1"/>
        <end position="444"/>
    </location>
</feature>
<feature type="binding site" evidence="1">
    <location>
        <begin position="111"/>
        <end position="117"/>
    </location>
    <ligand>
        <name>ATP</name>
        <dbReference type="ChEBI" id="CHEBI:30616"/>
    </ligand>
</feature>
<evidence type="ECO:0000255" key="1">
    <source>
        <dbReference type="HAMAP-Rule" id="MF_00046"/>
    </source>
</evidence>
<dbReference type="EC" id="6.3.2.8" evidence="1"/>
<dbReference type="EMBL" id="CP000414">
    <property type="protein sequence ID" value="ABJ61819.1"/>
    <property type="molecule type" value="Genomic_DNA"/>
</dbReference>
<dbReference type="RefSeq" id="WP_004164289.1">
    <property type="nucleotide sequence ID" value="NC_008531.1"/>
</dbReference>
<dbReference type="SMR" id="Q03YA3"/>
<dbReference type="EnsemblBacteria" id="ABJ61819">
    <property type="protein sequence ID" value="ABJ61819"/>
    <property type="gene ID" value="LEUM_0709"/>
</dbReference>
<dbReference type="GeneID" id="29576942"/>
<dbReference type="KEGG" id="lme:LEUM_0709"/>
<dbReference type="eggNOG" id="COG0773">
    <property type="taxonomic scope" value="Bacteria"/>
</dbReference>
<dbReference type="HOGENOM" id="CLU_028104_1_0_9"/>
<dbReference type="UniPathway" id="UPA00219"/>
<dbReference type="Proteomes" id="UP000000362">
    <property type="component" value="Chromosome"/>
</dbReference>
<dbReference type="GO" id="GO:0005737">
    <property type="term" value="C:cytoplasm"/>
    <property type="evidence" value="ECO:0007669"/>
    <property type="project" value="UniProtKB-SubCell"/>
</dbReference>
<dbReference type="GO" id="GO:0005524">
    <property type="term" value="F:ATP binding"/>
    <property type="evidence" value="ECO:0007669"/>
    <property type="project" value="UniProtKB-UniRule"/>
</dbReference>
<dbReference type="GO" id="GO:0008763">
    <property type="term" value="F:UDP-N-acetylmuramate-L-alanine ligase activity"/>
    <property type="evidence" value="ECO:0007669"/>
    <property type="project" value="UniProtKB-UniRule"/>
</dbReference>
<dbReference type="GO" id="GO:0051301">
    <property type="term" value="P:cell division"/>
    <property type="evidence" value="ECO:0007669"/>
    <property type="project" value="UniProtKB-KW"/>
</dbReference>
<dbReference type="GO" id="GO:0071555">
    <property type="term" value="P:cell wall organization"/>
    <property type="evidence" value="ECO:0007669"/>
    <property type="project" value="UniProtKB-KW"/>
</dbReference>
<dbReference type="GO" id="GO:0009252">
    <property type="term" value="P:peptidoglycan biosynthetic process"/>
    <property type="evidence" value="ECO:0007669"/>
    <property type="project" value="UniProtKB-UniRule"/>
</dbReference>
<dbReference type="GO" id="GO:0008360">
    <property type="term" value="P:regulation of cell shape"/>
    <property type="evidence" value="ECO:0007669"/>
    <property type="project" value="UniProtKB-KW"/>
</dbReference>
<dbReference type="Gene3D" id="3.90.190.20">
    <property type="entry name" value="Mur ligase, C-terminal domain"/>
    <property type="match status" value="1"/>
</dbReference>
<dbReference type="Gene3D" id="3.40.1190.10">
    <property type="entry name" value="Mur-like, catalytic domain"/>
    <property type="match status" value="1"/>
</dbReference>
<dbReference type="Gene3D" id="3.40.50.720">
    <property type="entry name" value="NAD(P)-binding Rossmann-like Domain"/>
    <property type="match status" value="1"/>
</dbReference>
<dbReference type="HAMAP" id="MF_00046">
    <property type="entry name" value="MurC"/>
    <property type="match status" value="1"/>
</dbReference>
<dbReference type="InterPro" id="IPR036565">
    <property type="entry name" value="Mur-like_cat_sf"/>
</dbReference>
<dbReference type="InterPro" id="IPR004101">
    <property type="entry name" value="Mur_ligase_C"/>
</dbReference>
<dbReference type="InterPro" id="IPR036615">
    <property type="entry name" value="Mur_ligase_C_dom_sf"/>
</dbReference>
<dbReference type="InterPro" id="IPR013221">
    <property type="entry name" value="Mur_ligase_cen"/>
</dbReference>
<dbReference type="InterPro" id="IPR000713">
    <property type="entry name" value="Mur_ligase_N"/>
</dbReference>
<dbReference type="InterPro" id="IPR050061">
    <property type="entry name" value="MurCDEF_pg_biosynth"/>
</dbReference>
<dbReference type="InterPro" id="IPR005758">
    <property type="entry name" value="UDP-N-AcMur_Ala_ligase_MurC"/>
</dbReference>
<dbReference type="NCBIfam" id="TIGR01082">
    <property type="entry name" value="murC"/>
    <property type="match status" value="1"/>
</dbReference>
<dbReference type="PANTHER" id="PTHR43445:SF3">
    <property type="entry name" value="UDP-N-ACETYLMURAMATE--L-ALANINE LIGASE"/>
    <property type="match status" value="1"/>
</dbReference>
<dbReference type="PANTHER" id="PTHR43445">
    <property type="entry name" value="UDP-N-ACETYLMURAMATE--L-ALANINE LIGASE-RELATED"/>
    <property type="match status" value="1"/>
</dbReference>
<dbReference type="Pfam" id="PF01225">
    <property type="entry name" value="Mur_ligase"/>
    <property type="match status" value="1"/>
</dbReference>
<dbReference type="Pfam" id="PF02875">
    <property type="entry name" value="Mur_ligase_C"/>
    <property type="match status" value="1"/>
</dbReference>
<dbReference type="Pfam" id="PF08245">
    <property type="entry name" value="Mur_ligase_M"/>
    <property type="match status" value="1"/>
</dbReference>
<dbReference type="SUPFAM" id="SSF51984">
    <property type="entry name" value="MurCD N-terminal domain"/>
    <property type="match status" value="1"/>
</dbReference>
<dbReference type="SUPFAM" id="SSF53623">
    <property type="entry name" value="MurD-like peptide ligases, catalytic domain"/>
    <property type="match status" value="1"/>
</dbReference>
<dbReference type="SUPFAM" id="SSF53244">
    <property type="entry name" value="MurD-like peptide ligases, peptide-binding domain"/>
    <property type="match status" value="1"/>
</dbReference>
<keyword id="KW-0067">ATP-binding</keyword>
<keyword id="KW-0131">Cell cycle</keyword>
<keyword id="KW-0132">Cell division</keyword>
<keyword id="KW-0133">Cell shape</keyword>
<keyword id="KW-0961">Cell wall biogenesis/degradation</keyword>
<keyword id="KW-0963">Cytoplasm</keyword>
<keyword id="KW-0436">Ligase</keyword>
<keyword id="KW-0547">Nucleotide-binding</keyword>
<keyword id="KW-0573">Peptidoglycan synthesis</keyword>
<keyword id="KW-1185">Reference proteome</keyword>